<name>MAMJ_MAGGM</name>
<comment type="function">
    <text evidence="1 5 9 14 15 17">Required for assembly of magnetosome chains (PubMed:16299495). Regulates the dynamic behavior of MamK filaments (By similarity). May connect magnetosomes to MamK filaments (Probable). Moves from the cell poles towards midcell; movement does not depend on the treadmilling ability of MamK, suggesting MamJ associates and disassociates continuously from the MamK filament (PubMed:27733152).</text>
</comment>
<comment type="subunit">
    <text evidence="6 13">Forms homooligomers (Probable) (PubMed:17601786). Interacts with MamK (PubMed:17601786).</text>
</comment>
<comment type="subcellular location">
    <subcellularLocation>
        <location evidence="4">Magnetosome</location>
    </subcellularLocation>
    <text evidence="5 7">Tagged protein extends from one pole to the other, and is longer than the magnetosome chain (PubMed:16299495). Correct subcellular location requires MamK (PubMed:20487281).</text>
</comment>
<comment type="induction">
    <text evidence="12 16">Part of the probable 17 gene mamAB operon.</text>
</comment>
<comment type="domain">
    <text evidence="6 15">The gene is quite polymorphic, the central region is subject to recombination between internal Glu-Pro-rich repeats (Probable). The polymorphic central region is not required for function, small segments in the N- and C-terminus are however required (PubMed:17601786).</text>
</comment>
<comment type="PTM">
    <text evidence="4 6">Identified by N-terminal sequencing of a protein that is about 96 kDa in size (PubMed:14766587). The protein runs anomalously on protein gels (PubMed:17601786).</text>
</comment>
<comment type="disruption phenotype">
    <text evidence="3 5 6 8 9">Single gene deletion has compact clusters of magnetosomes instead of magnetosome chains; precursor magnetosome vesicles and vesicles containing immature crystals are throughout the cytoplasm and no longer associated with filaments. Cells have substantially decreased magnetic orientation (PubMed:16299495, PubMed:17601786). No change in location of MamK (PubMed:17601786). Single deletion slows recovery of MamK dynamics following photobleaching (PubMed:27733152). Deletion of 3 consecutive genes (mamJ, mamK, mamL) leads to cells devoid of magnetosomes or a magnetic response (PubMed:22043287). Deletion of approximately 80 kb of DNA, including this operon, leads to cells that are non-magnetic, lack internal membrane systems, grow poorly, have reduced mobility and take-up and accumulate iron poorly (PubMed:13129949).</text>
</comment>
<comment type="miscellaneous">
    <text evidence="15">The gene is quite polymorphic, the central region is subject to recombination between similar Glu- and Pro-rich repeats.</text>
</comment>
<comment type="miscellaneous">
    <text evidence="12">This bacteria makes up to 60 cubo-octahedral magnetosomes of about 45 nm in diameter which contain membrane-bound crystals of magnetite (Fe(3)O(4)).</text>
</comment>
<comment type="miscellaneous">
    <text evidence="8">Expression of just the minimal mamAB gene cluster (MGMSRv2__2365 to MGMSRv2__2381), including this gene, is sufficient to form a minimal magnetosome chain with small magnetite particles.</text>
</comment>
<comment type="similarity">
    <text evidence="11">Belongs to the magnetosome MamJ protein family.</text>
</comment>
<accession>V6F519</accession>
<accession>Q3BKB2</accession>
<accession>Q6NE60</accession>
<organism>
    <name type="scientific">Magnetospirillum gryphiswaldense (strain DSM 6361 / JCM 21280 / NBRC 15271 / MSR-1)</name>
    <dbReference type="NCBI Taxonomy" id="431944"/>
    <lineage>
        <taxon>Bacteria</taxon>
        <taxon>Pseudomonadati</taxon>
        <taxon>Pseudomonadota</taxon>
        <taxon>Alphaproteobacteria</taxon>
        <taxon>Rhodospirillales</taxon>
        <taxon>Rhodospirillaceae</taxon>
        <taxon>Magnetospirillum</taxon>
    </lineage>
</organism>
<gene>
    <name evidence="10" type="primary">mamJ</name>
    <name type="ordered locus">MGMSRv2__2378</name>
    <name type="ORF">mgI488</name>
    <name type="ORF">MGR_4092</name>
</gene>
<protein>
    <recommendedName>
        <fullName evidence="11">Magnetosome-associated protein MamJ</fullName>
    </recommendedName>
</protein>
<evidence type="ECO:0000250" key="1">
    <source>
        <dbReference type="UniProtKB" id="Q2W8Q7"/>
    </source>
</evidence>
<evidence type="ECO:0000256" key="2">
    <source>
        <dbReference type="SAM" id="MobiDB-lite"/>
    </source>
</evidence>
<evidence type="ECO:0000269" key="3">
    <source>
    </source>
</evidence>
<evidence type="ECO:0000269" key="4">
    <source>
    </source>
</evidence>
<evidence type="ECO:0000269" key="5">
    <source>
    </source>
</evidence>
<evidence type="ECO:0000269" key="6">
    <source>
    </source>
</evidence>
<evidence type="ECO:0000269" key="7">
    <source>
    </source>
</evidence>
<evidence type="ECO:0000269" key="8">
    <source>
    </source>
</evidence>
<evidence type="ECO:0000269" key="9">
    <source>
    </source>
</evidence>
<evidence type="ECO:0000303" key="10">
    <source>
    </source>
</evidence>
<evidence type="ECO:0000305" key="11"/>
<evidence type="ECO:0000305" key="12">
    <source>
    </source>
</evidence>
<evidence type="ECO:0000305" key="13">
    <source>
    </source>
</evidence>
<evidence type="ECO:0000305" key="14">
    <source>
    </source>
</evidence>
<evidence type="ECO:0000305" key="15">
    <source>
    </source>
</evidence>
<evidence type="ECO:0000305" key="16">
    <source>
    </source>
</evidence>
<evidence type="ECO:0000305" key="17">
    <source>
    </source>
</evidence>
<feature type="chain" id="PRO_0000447803" description="Magnetosome-associated protein MamJ">
    <location>
        <begin position="1"/>
        <end position="466"/>
    </location>
</feature>
<feature type="repeat" description="Tandem repeat unit 1" evidence="5">
    <location>
        <begin position="81"/>
        <end position="168"/>
    </location>
</feature>
<feature type="repeat" description="Glu-Pro-rich motif 1" evidence="6">
    <location>
        <begin position="145"/>
        <end position="164"/>
    </location>
</feature>
<feature type="repeat" description="Tandem repeat unit 2" evidence="5">
    <location>
        <begin position="169"/>
        <end position="256"/>
    </location>
</feature>
<feature type="repeat" description="Glu-Pro-rich motif 2" evidence="6">
    <location>
        <begin position="233"/>
        <end position="252"/>
    </location>
</feature>
<feature type="repeat" description="Glu-Pro-rich motif 3" evidence="6">
    <location>
        <begin position="253"/>
        <end position="272"/>
    </location>
</feature>
<feature type="region of interest" description="Not required to restore magnetic response to deletion mutant" evidence="6">
    <location>
        <begin position="1"/>
        <end position="24"/>
    </location>
</feature>
<feature type="region of interest" description="Disordered" evidence="2">
    <location>
        <begin position="1"/>
        <end position="23"/>
    </location>
</feature>
<feature type="region of interest" description="Required to restore magnetic response to deletion mutant" evidence="6">
    <location>
        <begin position="25"/>
        <end position="80"/>
    </location>
</feature>
<feature type="region of interest" description="Disordered" evidence="2">
    <location>
        <begin position="60"/>
        <end position="80"/>
    </location>
</feature>
<feature type="region of interest" description="Not required to restore magnetic response to deletion mutant" evidence="6">
    <location>
        <begin position="81"/>
        <end position="256"/>
    </location>
</feature>
<feature type="region of interest" description="Not required to restore magnetic response to deletion mutant" evidence="6">
    <location>
        <begin position="136"/>
        <end position="334"/>
    </location>
</feature>
<feature type="region of interest" description="Not required to restore magnetic response to deletion mutant" evidence="6">
    <location>
        <begin position="333"/>
        <end position="374"/>
    </location>
</feature>
<feature type="region of interest" description="Required to restore magnetic response to deletion mutant" evidence="6">
    <location>
        <begin position="375"/>
        <end position="432"/>
    </location>
</feature>
<feature type="region of interest" description="Required to restore magnetic response to deletion mutant" evidence="6">
    <location>
        <begin position="426"/>
        <end position="466"/>
    </location>
</feature>
<feature type="region of interest" description="Not required to restore magnetic response to deletion mutant" evidence="6">
    <location>
        <begin position="432"/>
        <end position="466"/>
    </location>
</feature>
<feature type="sequence variant" description="In variant 252-Glu--Ala-291 del.">
    <location>
        <begin position="252"/>
        <end position="291"/>
    </location>
</feature>
<dbReference type="EMBL" id="BX571797">
    <property type="protein sequence ID" value="CAE12033.1"/>
    <property type="molecule type" value="Genomic_DNA"/>
</dbReference>
<dbReference type="EMBL" id="AM085146">
    <property type="protein sequence ID" value="CAJ30117.1"/>
    <property type="molecule type" value="Genomic_DNA"/>
</dbReference>
<dbReference type="EMBL" id="CU459003">
    <property type="protein sequence ID" value="CAM78024.1"/>
    <property type="molecule type" value="Genomic_DNA"/>
</dbReference>
<dbReference type="EMBL" id="HG794546">
    <property type="protein sequence ID" value="CDK99593.1"/>
    <property type="molecule type" value="Genomic_DNA"/>
</dbReference>
<dbReference type="STRING" id="1430440.MGMSRv2__2378"/>
<dbReference type="KEGG" id="mgy:MGMSRv2__2378"/>
<dbReference type="HOGENOM" id="CLU_538390_0_0_5"/>
<dbReference type="Proteomes" id="UP000018922">
    <property type="component" value="Chromosome I"/>
</dbReference>
<dbReference type="GO" id="GO:0110143">
    <property type="term" value="C:magnetosome"/>
    <property type="evidence" value="ECO:0000314"/>
    <property type="project" value="UniProtKB"/>
</dbReference>
<dbReference type="GO" id="GO:0140923">
    <property type="term" value="P:magnetosome assembly"/>
    <property type="evidence" value="ECO:0000315"/>
    <property type="project" value="UniProtKB"/>
</dbReference>
<dbReference type="NCBIfam" id="NF040987">
    <property type="entry name" value="MamJ"/>
    <property type="match status" value="2"/>
</dbReference>
<keyword id="KW-0091">Biomineralization</keyword>
<keyword id="KW-0903">Direct protein sequencing</keyword>
<keyword id="KW-1281">Magnetosome</keyword>
<keyword id="KW-1185">Reference proteome</keyword>
<keyword id="KW-0677">Repeat</keyword>
<reference key="1">
    <citation type="journal article" date="2003" name="J. Bacteriol.">
        <title>Characterization of a spontaneous nonmagnetic mutant of Magnetospirillum gryphiswaldense reveals a large deletion comprising a putative magnetosome island.</title>
        <authorList>
            <person name="Schuebbe S."/>
            <person name="Kube M."/>
            <person name="Scheffel A."/>
            <person name="Wawer C."/>
            <person name="Heyen U."/>
            <person name="Meyerdierks A."/>
            <person name="Madkour M.H."/>
            <person name="Mayer F."/>
            <person name="Reinhardt R."/>
            <person name="Schueler D."/>
        </authorList>
    </citation>
    <scope>NUCLEOTIDE SEQUENCE [GENOMIC DNA]</scope>
    <scope>PROBABLE OPERON</scope>
    <scope>DISRUPTION PHENOTYPE</scope>
    <source>
        <strain>DSM 6361 / JCM 21280 / NBRC 15271 / MSR-1</strain>
    </source>
</reference>
<reference key="2">
    <citation type="journal article" date="2005" name="J. Bacteriol.">
        <title>A hypervariable 130-kilobase genomic region of Magnetospirillum gryphiswaldense comprises a magnetosome island which undergoes frequent rearrangements during stationary growth.</title>
        <authorList>
            <person name="Ullrich S."/>
            <person name="Kube M."/>
            <person name="Schuebbe S."/>
            <person name="Reinhardt R."/>
            <person name="Schueler D."/>
        </authorList>
    </citation>
    <scope>NUCLEOTIDE SEQUENCE [GENOMIC DNA]</scope>
    <scope>SEQUENCE REVISION TO 251</scope>
    <source>
        <strain>DSM 6361 / JCM 21280 / NBRC 15271 / MSR-1</strain>
    </source>
</reference>
<reference key="3">
    <citation type="journal article" date="2007" name="J. Bacteriol.">
        <title>Comparative genome analysis of four magnetotactic bacteria reveals a complex set of group-specific genes implicated in magnetosome biomineralization and function.</title>
        <authorList>
            <person name="Richter M."/>
            <person name="Kube M."/>
            <person name="Bazylinski D.A."/>
            <person name="Lombardot T."/>
            <person name="Gloeckner F.O."/>
            <person name="Reinhardt R."/>
            <person name="Schueler D."/>
        </authorList>
    </citation>
    <scope>NUCLEOTIDE SEQUENCE [LARGE SCALE GENOMIC DNA]</scope>
    <source>
        <strain>DSM 6361 / JCM 21280 / NBRC 15271 / MSR-1</strain>
    </source>
</reference>
<reference key="4">
    <citation type="journal article" date="2014" name="Genome Announc.">
        <title>Complete genome sequence of Magnetospirillum gryphiswaldense MSR-1.</title>
        <authorList>
            <person name="Wang X."/>
            <person name="Wang Q."/>
            <person name="Zhang W."/>
            <person name="Wang Y."/>
            <person name="Li L."/>
            <person name="Wen T."/>
            <person name="Zhang T."/>
            <person name="Zhang Y."/>
            <person name="Xu J."/>
            <person name="Hu J."/>
            <person name="Li S."/>
            <person name="Liu L."/>
            <person name="Liu J."/>
            <person name="Jiang W."/>
            <person name="Tian J."/>
            <person name="Li Y."/>
            <person name="Schuler D."/>
            <person name="Wang L."/>
            <person name="Li J."/>
        </authorList>
    </citation>
    <scope>NUCLEOTIDE SEQUENCE [LARGE SCALE GENOMIC DNA]</scope>
    <source>
        <strain>DSM 6361 / JCM 21280 / NBRC 15271 / MSR-1</strain>
    </source>
</reference>
<reference key="5">
    <citation type="journal article" date="2004" name="Appl. Environ. Microbiol.">
        <title>Biochemical and proteomic analysis of the magnetosome membrane in Magnetospirillum gryphiswaldense.</title>
        <authorList>
            <person name="Gruenberg K."/>
            <person name="Mueller E.C."/>
            <person name="Otto A."/>
            <person name="Reszka R."/>
            <person name="Linder D."/>
            <person name="Kube M."/>
            <person name="Reinhardt R."/>
            <person name="Schueler D."/>
        </authorList>
    </citation>
    <scope>PROTEIN SEQUENCE OF 1-10</scope>
    <scope>SUBUNIT</scope>
    <scope>SUBCELLULAR LOCATION</scope>
    <scope>IDENTIFICATION BY MASS SPECTROMETRY</scope>
    <source>
        <strain>DSM 6361 / JCM 21280 / NBRC 15271 / MSR-1</strain>
    </source>
</reference>
<reference key="6">
    <citation type="journal article" date="2006" name="Nature">
        <title>An acidic protein aligns magnetosomes along a filamentous structure in magnetotactic bacteria.</title>
        <authorList>
            <person name="Scheffel A."/>
            <person name="Gruska M."/>
            <person name="Faivre D."/>
            <person name="Linaroudis A."/>
            <person name="Plitzko J.M."/>
            <person name="Schueler D."/>
        </authorList>
    </citation>
    <scope>FUNCTION</scope>
    <scope>SUBCELLULAR LOCATION</scope>
    <scope>DOMAIN</scope>
    <scope>DISRUPTION PHENOTYPE</scope>
    <source>
        <strain>DSM 6361 / JCM 21280 / NBRC 15271 / MSR-1</strain>
    </source>
</reference>
<reference key="7">
    <citation type="journal article" date="2007" name="J. Bacteriol.">
        <title>The acidic repetitive domain of the Magnetospirillum gryphiswaldense MamJ protein displays hypervariability but is not required for magnetosome chain assembly.</title>
        <authorList>
            <person name="Scheffel A."/>
            <person name="Schueler D."/>
        </authorList>
    </citation>
    <scope>SUBUNIT</scope>
    <scope>INTERACTION WITH MAMK</scope>
    <scope>DISRUPTION PHENOTYPE</scope>
    <scope>VARIANT 252-GLU--ALA-291 DEL</scope>
    <source>
        <strain>DSM 6361 / JCM 21280 / NBRC 15271 / MSR-1</strain>
    </source>
</reference>
<reference key="8">
    <citation type="journal article" date="2010" name="Mol. Microbiol.">
        <title>Loss of the actin-like protein MamK has pleiotropic effects on magnetosome formation and chain assembly in Magnetospirillum gryphiswaldense.</title>
        <authorList>
            <person name="Katzmann E."/>
            <person name="Scheffel A."/>
            <person name="Gruska M."/>
            <person name="Plitzko J.M."/>
            <person name="Schueler D."/>
        </authorList>
    </citation>
    <scope>SUBCELLULAR LOCATION</scope>
    <source>
        <strain>DSM 6361 / JCM 21280 / NBRC 15271 / MSR-1</strain>
    </source>
</reference>
<reference key="9">
    <citation type="journal article" date="2011" name="PLoS ONE">
        <title>Functional analysis of the magnetosome island in Magnetospirillum gryphiswaldense: the mamAB operon is sufficient for magnetite biomineralization.</title>
        <authorList>
            <person name="Lohsse A."/>
            <person name="Ullrich S."/>
            <person name="Katzmann E."/>
            <person name="Borg S."/>
            <person name="Wanner G."/>
            <person name="Richter M."/>
            <person name="Voigt B."/>
            <person name="Schweder T."/>
            <person name="Schueler D."/>
        </authorList>
    </citation>
    <scope>MINIMAL MAGNETOSOME ISLAND</scope>
    <scope>PROBABLE OPERON</scope>
    <scope>DISRUPTION PHENOTYPE</scope>
    <source>
        <strain>DSM 6361 / JCM 21280 / NBRC 15271 / MSR-1</strain>
    </source>
</reference>
<reference key="10">
    <citation type="journal article" date="2016" name="BMC Biol.">
        <title>Segregation of prokaryotic magnetosomes organelles is driven by treadmilling of a dynamic actin-like MamK filament.</title>
        <authorList>
            <person name="Toro-Nahuelpan M."/>
            <person name="Mueller F.D."/>
            <person name="Klumpp S."/>
            <person name="Plitzko J.M."/>
            <person name="Bramkamp M."/>
            <person name="Schueler D."/>
        </authorList>
    </citation>
    <scope>FUNCTION IN MAGNETOSOME SEGREGATION</scope>
    <scope>DISRUPTION PHENOTYPE</scope>
    <source>
        <strain>DSM 6361 / JCM 21280 / NBRC 15271 / MSR-1</strain>
    </source>
</reference>
<proteinExistence type="evidence at protein level"/>
<sequence length="466" mass="48517">MAKNRRDRGTDLPGDGDQKISTGPEIVSVTVHPSPNLAAAAKPVQGDIWASLLESSPWSANQGGLVETAQPPSAPIRSQDPVPVADLVNRWSQPIWRTAPLAGNAESSEEGVVAPSLTQSDSVLAVSDLVIDVQPETDAEVEVSIEPEPALVEPVIEIEAEAAEVEPEPAPVADLVNRWAQPIWRTAPLAGNAESSEEGVVAPSLTQSDSVLAVSDLVIDVQPEANAEVEVSIEPEPALVEPVIEIEAEAAEVEPEPAPVEPVIEIEAEAAEVEPEPAPVEPVIEIEAEAAEVEPEPAPVEPAIEIEAIRVELEPVLIDEVVELVTEFEYSQAESVASADLIANPAPAESSRLAELLDEAAAIAAPAVAVAVEATRQPNKITASVKKRAPVQEVPVEDLLGGIFGVAGSAVRGVFTIGGGFVDGVVKGGRLVGSNVVAGTRRLAQTIEVSCGSCSSPKCDAEDKNK</sequence>